<keyword id="KW-0120">Carbon dioxide fixation</keyword>
<keyword id="KW-0456">Lyase</keyword>
<keyword id="KW-0460">Magnesium</keyword>
<keyword id="KW-1185">Reference proteome</keyword>
<comment type="function">
    <text evidence="1">Forms oxaloacetate, a four-carbon dicarboxylic acid source for the tricarboxylic acid cycle.</text>
</comment>
<comment type="catalytic activity">
    <reaction evidence="1">
        <text>oxaloacetate + phosphate = phosphoenolpyruvate + hydrogencarbonate</text>
        <dbReference type="Rhea" id="RHEA:28370"/>
        <dbReference type="ChEBI" id="CHEBI:16452"/>
        <dbReference type="ChEBI" id="CHEBI:17544"/>
        <dbReference type="ChEBI" id="CHEBI:43474"/>
        <dbReference type="ChEBI" id="CHEBI:58702"/>
        <dbReference type="EC" id="4.1.1.31"/>
    </reaction>
</comment>
<comment type="cofactor">
    <cofactor evidence="1">
        <name>Mg(2+)</name>
        <dbReference type="ChEBI" id="CHEBI:18420"/>
    </cofactor>
</comment>
<comment type="similarity">
    <text evidence="1">Belongs to the PEPCase type 1 family.</text>
</comment>
<protein>
    <recommendedName>
        <fullName evidence="1">Phosphoenolpyruvate carboxylase</fullName>
        <shortName evidence="1">PEPC</shortName>
        <shortName evidence="1">PEPCase</shortName>
        <ecNumber evidence="1">4.1.1.31</ecNumber>
    </recommendedName>
</protein>
<organism>
    <name type="scientific">Escherichia coli O139:H28 (strain E24377A / ETEC)</name>
    <dbReference type="NCBI Taxonomy" id="331111"/>
    <lineage>
        <taxon>Bacteria</taxon>
        <taxon>Pseudomonadati</taxon>
        <taxon>Pseudomonadota</taxon>
        <taxon>Gammaproteobacteria</taxon>
        <taxon>Enterobacterales</taxon>
        <taxon>Enterobacteriaceae</taxon>
        <taxon>Escherichia</taxon>
    </lineage>
</organism>
<accession>A7ZUH4</accession>
<evidence type="ECO:0000255" key="1">
    <source>
        <dbReference type="HAMAP-Rule" id="MF_00595"/>
    </source>
</evidence>
<sequence length="883" mass="99077">MNEQYSALRSNVSMLGKVLGETIKDALGEHILERVETIRKLSKSSRAGNDANRQELLTTLQNLSNDELLPVARAFSQFLNLANTAEQYHSISPKGEAASNPEVIARTLRKLKNQPELSEDTIKKAVESLSLELVLTAHPTEITRRTLIHKMVEVNACLKQLDNKDIADYEHNQLMRRLRQLIAQSWHTDEIRKLRPSPVDEAKWGFAVVENSLWQGVPNYLRELNEQLEENLGYKLPVEFVPVRFTSWMGGDRDGNPNVTADITRHVLLLSRWKATDLFLKDIQVLVSELSMVEATPELLALVGEEGAAEPYRYLMKNLRSRLMATQAWLEARLKGEELPKPEGLLTQNEELWEPLYACYQSLQACGMGIIANGDLLDTLRRVKCFGVPLVRIDIRQESTRHTEALGELTRYLGIGDYESWSEADKQAFLIRELNSKRPLLPRNWQPSAETREVLDTCQVIAEAPQGSIAAYVISMAKTPSDVLAVHLLLKEAGIGFAMPVAPLFETLDDLNNANDVMTQLLNIDWYRGLIQGKQMVMIGYSDSAKDAGVMAASWAQYQAQDALIKTCEKAGIELTLFHGRGGSIGRGGAPAHAALLSQPPGSLKGGLRVTEQGEMIRFKYGLPEITVSSLSLYTGAILEANLLPPPEPKESWRRIMDELSVISCDLYRGYVRENKDFVPYFRSATPEQELGKLPLGSRPAKRRPTGGVESLRAIPWIFAWTQNRLMLPAWLGAGTALQKVVEDGKQSELEAMCRDWPFFSTRLGMLEMVFAKADLWLAEYYDQRLVDKALWPLGKELRNLQEEDIKVVLAIANDSHLMADLPWIAESIQLRNIYTDPLNVLQAELLHRSRQAEKEGQEPDPRVEQALMVTIAGIAAGMRNTG</sequence>
<gene>
    <name evidence="1" type="primary">ppc</name>
    <name type="ordered locus">EcE24377A_4495</name>
</gene>
<reference key="1">
    <citation type="journal article" date="2008" name="J. Bacteriol.">
        <title>The pangenome structure of Escherichia coli: comparative genomic analysis of E. coli commensal and pathogenic isolates.</title>
        <authorList>
            <person name="Rasko D.A."/>
            <person name="Rosovitz M.J."/>
            <person name="Myers G.S.A."/>
            <person name="Mongodin E.F."/>
            <person name="Fricke W.F."/>
            <person name="Gajer P."/>
            <person name="Crabtree J."/>
            <person name="Sebaihia M."/>
            <person name="Thomson N.R."/>
            <person name="Chaudhuri R."/>
            <person name="Henderson I.R."/>
            <person name="Sperandio V."/>
            <person name="Ravel J."/>
        </authorList>
    </citation>
    <scope>NUCLEOTIDE SEQUENCE [LARGE SCALE GENOMIC DNA]</scope>
    <source>
        <strain>E24377A / ETEC</strain>
    </source>
</reference>
<name>CAPP_ECO24</name>
<feature type="chain" id="PRO_1000061229" description="Phosphoenolpyruvate carboxylase">
    <location>
        <begin position="1"/>
        <end position="883"/>
    </location>
</feature>
<feature type="active site" evidence="1">
    <location>
        <position position="138"/>
    </location>
</feature>
<feature type="active site" evidence="1">
    <location>
        <position position="546"/>
    </location>
</feature>
<dbReference type="EC" id="4.1.1.31" evidence="1"/>
<dbReference type="EMBL" id="CP000800">
    <property type="protein sequence ID" value="ABV21083.1"/>
    <property type="molecule type" value="Genomic_DNA"/>
</dbReference>
<dbReference type="RefSeq" id="WP_001005579.1">
    <property type="nucleotide sequence ID" value="NC_009801.1"/>
</dbReference>
<dbReference type="SMR" id="A7ZUH4"/>
<dbReference type="GeneID" id="93777937"/>
<dbReference type="KEGG" id="ecw:EcE24377A_4495"/>
<dbReference type="HOGENOM" id="CLU_006557_2_0_6"/>
<dbReference type="Proteomes" id="UP000001122">
    <property type="component" value="Chromosome"/>
</dbReference>
<dbReference type="GO" id="GO:0005829">
    <property type="term" value="C:cytosol"/>
    <property type="evidence" value="ECO:0007669"/>
    <property type="project" value="TreeGrafter"/>
</dbReference>
<dbReference type="GO" id="GO:0000287">
    <property type="term" value="F:magnesium ion binding"/>
    <property type="evidence" value="ECO:0007669"/>
    <property type="project" value="UniProtKB-UniRule"/>
</dbReference>
<dbReference type="GO" id="GO:0008964">
    <property type="term" value="F:phosphoenolpyruvate carboxylase activity"/>
    <property type="evidence" value="ECO:0007669"/>
    <property type="project" value="UniProtKB-UniRule"/>
</dbReference>
<dbReference type="GO" id="GO:0015977">
    <property type="term" value="P:carbon fixation"/>
    <property type="evidence" value="ECO:0007669"/>
    <property type="project" value="UniProtKB-UniRule"/>
</dbReference>
<dbReference type="GO" id="GO:0006107">
    <property type="term" value="P:oxaloacetate metabolic process"/>
    <property type="evidence" value="ECO:0007669"/>
    <property type="project" value="UniProtKB-UniRule"/>
</dbReference>
<dbReference type="GO" id="GO:0006099">
    <property type="term" value="P:tricarboxylic acid cycle"/>
    <property type="evidence" value="ECO:0007669"/>
    <property type="project" value="InterPro"/>
</dbReference>
<dbReference type="FunFam" id="1.20.1440.90:FF:000002">
    <property type="entry name" value="Phosphoenolpyruvate carboxylase"/>
    <property type="match status" value="1"/>
</dbReference>
<dbReference type="Gene3D" id="1.20.1440.90">
    <property type="entry name" value="Phosphoenolpyruvate/pyruvate domain"/>
    <property type="match status" value="1"/>
</dbReference>
<dbReference type="HAMAP" id="MF_00595">
    <property type="entry name" value="PEPcase_type1"/>
    <property type="match status" value="1"/>
</dbReference>
<dbReference type="InterPro" id="IPR021135">
    <property type="entry name" value="PEP_COase"/>
</dbReference>
<dbReference type="InterPro" id="IPR022805">
    <property type="entry name" value="PEP_COase_bac/pln-type"/>
</dbReference>
<dbReference type="InterPro" id="IPR018129">
    <property type="entry name" value="PEP_COase_Lys_AS"/>
</dbReference>
<dbReference type="InterPro" id="IPR033129">
    <property type="entry name" value="PEPCASE_His_AS"/>
</dbReference>
<dbReference type="InterPro" id="IPR015813">
    <property type="entry name" value="Pyrv/PenolPyrv_kinase-like_dom"/>
</dbReference>
<dbReference type="NCBIfam" id="NF000584">
    <property type="entry name" value="PRK00009.1"/>
    <property type="match status" value="1"/>
</dbReference>
<dbReference type="PANTHER" id="PTHR30523">
    <property type="entry name" value="PHOSPHOENOLPYRUVATE CARBOXYLASE"/>
    <property type="match status" value="1"/>
</dbReference>
<dbReference type="PANTHER" id="PTHR30523:SF6">
    <property type="entry name" value="PHOSPHOENOLPYRUVATE CARBOXYLASE"/>
    <property type="match status" value="1"/>
</dbReference>
<dbReference type="Pfam" id="PF00311">
    <property type="entry name" value="PEPcase"/>
    <property type="match status" value="1"/>
</dbReference>
<dbReference type="PRINTS" id="PR00150">
    <property type="entry name" value="PEPCARBXLASE"/>
</dbReference>
<dbReference type="SUPFAM" id="SSF51621">
    <property type="entry name" value="Phosphoenolpyruvate/pyruvate domain"/>
    <property type="match status" value="1"/>
</dbReference>
<dbReference type="PROSITE" id="PS00781">
    <property type="entry name" value="PEPCASE_1"/>
    <property type="match status" value="1"/>
</dbReference>
<dbReference type="PROSITE" id="PS00393">
    <property type="entry name" value="PEPCASE_2"/>
    <property type="match status" value="1"/>
</dbReference>
<proteinExistence type="inferred from homology"/>